<feature type="chain" id="PRO_1000004513" description="ATP phosphoribosyltransferase">
    <location>
        <begin position="1"/>
        <end position="298"/>
    </location>
</feature>
<reference key="1">
    <citation type="submission" date="2007-08" db="EMBL/GenBank/DDBJ databases">
        <authorList>
            <consortium name="The Vibrio harveyi Genome Sequencing Project"/>
            <person name="Bassler B."/>
            <person name="Clifton S.W."/>
            <person name="Fulton L."/>
            <person name="Delehaunty K."/>
            <person name="Fronick C."/>
            <person name="Harrison M."/>
            <person name="Markivic C."/>
            <person name="Fulton R."/>
            <person name="Tin-Wollam A.-M."/>
            <person name="Shah N."/>
            <person name="Pepin K."/>
            <person name="Nash W."/>
            <person name="Thiruvilangam P."/>
            <person name="Bhonagiri V."/>
            <person name="Waters C."/>
            <person name="Tu K.C."/>
            <person name="Irgon J."/>
            <person name="Wilson R.K."/>
        </authorList>
    </citation>
    <scope>NUCLEOTIDE SEQUENCE [LARGE SCALE GENOMIC DNA]</scope>
    <source>
        <strain>ATCC BAA-1116 / BB120</strain>
    </source>
</reference>
<evidence type="ECO:0000255" key="1">
    <source>
        <dbReference type="HAMAP-Rule" id="MF_00079"/>
    </source>
</evidence>
<dbReference type="EC" id="2.4.2.17" evidence="1"/>
<dbReference type="EMBL" id="CP000789">
    <property type="protein sequence ID" value="ABU70799.1"/>
    <property type="molecule type" value="Genomic_DNA"/>
</dbReference>
<dbReference type="RefSeq" id="WP_012127624.1">
    <property type="nucleotide sequence ID" value="NC_009783.1"/>
</dbReference>
<dbReference type="SMR" id="A7MX14"/>
<dbReference type="GeneID" id="67377727"/>
<dbReference type="KEGG" id="vha:VIBHAR_01830"/>
<dbReference type="PATRIC" id="fig|338187.25.peg.846"/>
<dbReference type="UniPathway" id="UPA00031">
    <property type="reaction ID" value="UER00006"/>
</dbReference>
<dbReference type="Proteomes" id="UP000008152">
    <property type="component" value="Chromosome I"/>
</dbReference>
<dbReference type="GO" id="GO:0005737">
    <property type="term" value="C:cytoplasm"/>
    <property type="evidence" value="ECO:0007669"/>
    <property type="project" value="UniProtKB-SubCell"/>
</dbReference>
<dbReference type="GO" id="GO:0005524">
    <property type="term" value="F:ATP binding"/>
    <property type="evidence" value="ECO:0007669"/>
    <property type="project" value="UniProtKB-KW"/>
</dbReference>
<dbReference type="GO" id="GO:0003879">
    <property type="term" value="F:ATP phosphoribosyltransferase activity"/>
    <property type="evidence" value="ECO:0007669"/>
    <property type="project" value="UniProtKB-UniRule"/>
</dbReference>
<dbReference type="GO" id="GO:0000287">
    <property type="term" value="F:magnesium ion binding"/>
    <property type="evidence" value="ECO:0007669"/>
    <property type="project" value="UniProtKB-UniRule"/>
</dbReference>
<dbReference type="GO" id="GO:0000105">
    <property type="term" value="P:L-histidine biosynthetic process"/>
    <property type="evidence" value="ECO:0007669"/>
    <property type="project" value="UniProtKB-UniRule"/>
</dbReference>
<dbReference type="FunFam" id="3.30.70.120:FF:000002">
    <property type="entry name" value="ATP phosphoribosyltransferase"/>
    <property type="match status" value="1"/>
</dbReference>
<dbReference type="FunFam" id="3.40.190.10:FF:000008">
    <property type="entry name" value="ATP phosphoribosyltransferase"/>
    <property type="match status" value="1"/>
</dbReference>
<dbReference type="Gene3D" id="3.30.70.120">
    <property type="match status" value="1"/>
</dbReference>
<dbReference type="Gene3D" id="3.40.190.10">
    <property type="entry name" value="Periplasmic binding protein-like II"/>
    <property type="match status" value="2"/>
</dbReference>
<dbReference type="HAMAP" id="MF_00079">
    <property type="entry name" value="HisG_Long"/>
    <property type="match status" value="1"/>
</dbReference>
<dbReference type="InterPro" id="IPR020621">
    <property type="entry name" value="ATP-PRT_HisG_long"/>
</dbReference>
<dbReference type="InterPro" id="IPR013820">
    <property type="entry name" value="ATP_PRibTrfase_cat"/>
</dbReference>
<dbReference type="InterPro" id="IPR018198">
    <property type="entry name" value="ATP_PRibTrfase_CS"/>
</dbReference>
<dbReference type="InterPro" id="IPR001348">
    <property type="entry name" value="ATP_PRibTrfase_HisG"/>
</dbReference>
<dbReference type="InterPro" id="IPR013115">
    <property type="entry name" value="HisG_C"/>
</dbReference>
<dbReference type="InterPro" id="IPR011322">
    <property type="entry name" value="N-reg_PII-like_a/b"/>
</dbReference>
<dbReference type="InterPro" id="IPR015867">
    <property type="entry name" value="N-reg_PII/ATP_PRibTrfase_C"/>
</dbReference>
<dbReference type="NCBIfam" id="TIGR00070">
    <property type="entry name" value="hisG"/>
    <property type="match status" value="1"/>
</dbReference>
<dbReference type="NCBIfam" id="TIGR03455">
    <property type="entry name" value="HisG_C-term"/>
    <property type="match status" value="1"/>
</dbReference>
<dbReference type="PANTHER" id="PTHR21403:SF8">
    <property type="entry name" value="ATP PHOSPHORIBOSYLTRANSFERASE"/>
    <property type="match status" value="1"/>
</dbReference>
<dbReference type="PANTHER" id="PTHR21403">
    <property type="entry name" value="ATP PHOSPHORIBOSYLTRANSFERASE ATP-PRTASE"/>
    <property type="match status" value="1"/>
</dbReference>
<dbReference type="Pfam" id="PF01634">
    <property type="entry name" value="HisG"/>
    <property type="match status" value="1"/>
</dbReference>
<dbReference type="Pfam" id="PF08029">
    <property type="entry name" value="HisG_C"/>
    <property type="match status" value="1"/>
</dbReference>
<dbReference type="SUPFAM" id="SSF54913">
    <property type="entry name" value="GlnB-like"/>
    <property type="match status" value="1"/>
</dbReference>
<dbReference type="SUPFAM" id="SSF53850">
    <property type="entry name" value="Periplasmic binding protein-like II"/>
    <property type="match status" value="1"/>
</dbReference>
<dbReference type="PROSITE" id="PS01316">
    <property type="entry name" value="ATP_P_PHORIBOSYLTR"/>
    <property type="match status" value="1"/>
</dbReference>
<sequence>MQTQRLRIAIQKKGRLSKESQALLKKCGVKFNVMGERLVVHSENMPIDLLLVRDDDIPGLIMDGVVDLGFIGENELEEVRLDRKALGEPYEFVQLRRLDFGGCRLSIAIDKDEEYNGPQDLAGKRIATTYPQLLKAYMDEVGVPFSTCMLTGSVEVAPRAGLADAIADLVSTGATLEANGLKEAEIIFKSKATLIQRTGEFDADKVALIEKLLTRMQGVQQAKESKYIMLHAPAEKLDQIKALLPGAEDPTVLPLSADKQKVAVHLVSTENLFWETMEQLKELGASSILVLPIEKMME</sequence>
<comment type="function">
    <text evidence="1">Catalyzes the condensation of ATP and 5-phosphoribose 1-diphosphate to form N'-(5'-phosphoribosyl)-ATP (PR-ATP). Has a crucial role in the pathway because the rate of histidine biosynthesis seems to be controlled primarily by regulation of HisG enzymatic activity.</text>
</comment>
<comment type="catalytic activity">
    <reaction evidence="1">
        <text>1-(5-phospho-beta-D-ribosyl)-ATP + diphosphate = 5-phospho-alpha-D-ribose 1-diphosphate + ATP</text>
        <dbReference type="Rhea" id="RHEA:18473"/>
        <dbReference type="ChEBI" id="CHEBI:30616"/>
        <dbReference type="ChEBI" id="CHEBI:33019"/>
        <dbReference type="ChEBI" id="CHEBI:58017"/>
        <dbReference type="ChEBI" id="CHEBI:73183"/>
        <dbReference type="EC" id="2.4.2.17"/>
    </reaction>
</comment>
<comment type="cofactor">
    <cofactor evidence="1">
        <name>Mg(2+)</name>
        <dbReference type="ChEBI" id="CHEBI:18420"/>
    </cofactor>
</comment>
<comment type="activity regulation">
    <text evidence="1">Feedback inhibited by histidine.</text>
</comment>
<comment type="pathway">
    <text evidence="1">Amino-acid biosynthesis; L-histidine biosynthesis; L-histidine from 5-phospho-alpha-D-ribose 1-diphosphate: step 1/9.</text>
</comment>
<comment type="subcellular location">
    <subcellularLocation>
        <location evidence="1">Cytoplasm</location>
    </subcellularLocation>
</comment>
<comment type="similarity">
    <text evidence="1">Belongs to the ATP phosphoribosyltransferase family. Long subfamily.</text>
</comment>
<organism>
    <name type="scientific">Vibrio campbellii (strain ATCC BAA-1116)</name>
    <dbReference type="NCBI Taxonomy" id="2902295"/>
    <lineage>
        <taxon>Bacteria</taxon>
        <taxon>Pseudomonadati</taxon>
        <taxon>Pseudomonadota</taxon>
        <taxon>Gammaproteobacteria</taxon>
        <taxon>Vibrionales</taxon>
        <taxon>Vibrionaceae</taxon>
        <taxon>Vibrio</taxon>
    </lineage>
</organism>
<keyword id="KW-0028">Amino-acid biosynthesis</keyword>
<keyword id="KW-0067">ATP-binding</keyword>
<keyword id="KW-0963">Cytoplasm</keyword>
<keyword id="KW-0328">Glycosyltransferase</keyword>
<keyword id="KW-0368">Histidine biosynthesis</keyword>
<keyword id="KW-0460">Magnesium</keyword>
<keyword id="KW-0479">Metal-binding</keyword>
<keyword id="KW-0547">Nucleotide-binding</keyword>
<keyword id="KW-0808">Transferase</keyword>
<name>HIS1_VIBC1</name>
<accession>A7MX14</accession>
<proteinExistence type="inferred from homology"/>
<gene>
    <name evidence="1" type="primary">hisG</name>
    <name type="ordered locus">VIBHAR_01830</name>
</gene>
<protein>
    <recommendedName>
        <fullName evidence="1">ATP phosphoribosyltransferase</fullName>
        <shortName evidence="1">ATP-PRT</shortName>
        <shortName evidence="1">ATP-PRTase</shortName>
        <ecNumber evidence="1">2.4.2.17</ecNumber>
    </recommendedName>
</protein>